<dbReference type="EMBL" id="CP000742">
    <property type="protein sequence ID" value="ABR54437.1"/>
    <property type="molecule type" value="Genomic_DNA"/>
</dbReference>
<dbReference type="RefSeq" id="WP_011972340.1">
    <property type="nucleotide sequence ID" value="NC_009634.1"/>
</dbReference>
<dbReference type="STRING" id="406327.Mevan_0530"/>
<dbReference type="GeneID" id="5325841"/>
<dbReference type="KEGG" id="mvn:Mevan_0530"/>
<dbReference type="eggNOG" id="arCOG00105">
    <property type="taxonomic scope" value="Archaea"/>
</dbReference>
<dbReference type="HOGENOM" id="CLU_019250_2_2_2"/>
<dbReference type="OrthoDB" id="53136at2157"/>
<dbReference type="UniPathway" id="UPA00148"/>
<dbReference type="Proteomes" id="UP000001107">
    <property type="component" value="Chromosome"/>
</dbReference>
<dbReference type="GO" id="GO:0015420">
    <property type="term" value="F:ABC-type vitamin B12 transporter activity"/>
    <property type="evidence" value="ECO:0007669"/>
    <property type="project" value="UniProtKB-UniRule"/>
</dbReference>
<dbReference type="GO" id="GO:0003824">
    <property type="term" value="F:catalytic activity"/>
    <property type="evidence" value="ECO:0007669"/>
    <property type="project" value="InterPro"/>
</dbReference>
<dbReference type="GO" id="GO:0009236">
    <property type="term" value="P:cobalamin biosynthetic process"/>
    <property type="evidence" value="ECO:0007669"/>
    <property type="project" value="UniProtKB-UniRule"/>
</dbReference>
<dbReference type="CDD" id="cd05389">
    <property type="entry name" value="CobQ_N"/>
    <property type="match status" value="1"/>
</dbReference>
<dbReference type="CDD" id="cd01750">
    <property type="entry name" value="GATase1_CobQ"/>
    <property type="match status" value="1"/>
</dbReference>
<dbReference type="Gene3D" id="3.40.50.880">
    <property type="match status" value="1"/>
</dbReference>
<dbReference type="Gene3D" id="3.40.50.300">
    <property type="entry name" value="P-loop containing nucleotide triphosphate hydrolases"/>
    <property type="match status" value="1"/>
</dbReference>
<dbReference type="HAMAP" id="MF_00028">
    <property type="entry name" value="CobQ"/>
    <property type="match status" value="1"/>
</dbReference>
<dbReference type="InterPro" id="IPR029062">
    <property type="entry name" value="Class_I_gatase-like"/>
</dbReference>
<dbReference type="InterPro" id="IPR002586">
    <property type="entry name" value="CobQ/CobB/MinD/ParA_Nub-bd_dom"/>
</dbReference>
<dbReference type="InterPro" id="IPR033949">
    <property type="entry name" value="CobQ_GATase1"/>
</dbReference>
<dbReference type="InterPro" id="IPR047045">
    <property type="entry name" value="CobQ_N"/>
</dbReference>
<dbReference type="InterPro" id="IPR004459">
    <property type="entry name" value="CobQ_synth"/>
</dbReference>
<dbReference type="InterPro" id="IPR011698">
    <property type="entry name" value="GATase_3"/>
</dbReference>
<dbReference type="InterPro" id="IPR027417">
    <property type="entry name" value="P-loop_NTPase"/>
</dbReference>
<dbReference type="NCBIfam" id="TIGR00313">
    <property type="entry name" value="cobQ"/>
    <property type="match status" value="1"/>
</dbReference>
<dbReference type="NCBIfam" id="NF001989">
    <property type="entry name" value="PRK00784.1"/>
    <property type="match status" value="1"/>
</dbReference>
<dbReference type="PANTHER" id="PTHR21343:SF1">
    <property type="entry name" value="COBYRIC ACID SYNTHASE"/>
    <property type="match status" value="1"/>
</dbReference>
<dbReference type="PANTHER" id="PTHR21343">
    <property type="entry name" value="DETHIOBIOTIN SYNTHETASE"/>
    <property type="match status" value="1"/>
</dbReference>
<dbReference type="Pfam" id="PF01656">
    <property type="entry name" value="CbiA"/>
    <property type="match status" value="1"/>
</dbReference>
<dbReference type="Pfam" id="PF07685">
    <property type="entry name" value="GATase_3"/>
    <property type="match status" value="1"/>
</dbReference>
<dbReference type="SUPFAM" id="SSF52317">
    <property type="entry name" value="Class I glutamine amidotransferase-like"/>
    <property type="match status" value="1"/>
</dbReference>
<dbReference type="SUPFAM" id="SSF52540">
    <property type="entry name" value="P-loop containing nucleoside triphosphate hydrolases"/>
    <property type="match status" value="1"/>
</dbReference>
<dbReference type="PROSITE" id="PS51274">
    <property type="entry name" value="GATASE_COBBQ"/>
    <property type="match status" value="1"/>
</dbReference>
<reference key="1">
    <citation type="submission" date="2007-06" db="EMBL/GenBank/DDBJ databases">
        <title>Complete sequence of Methanococcus vannielii SB.</title>
        <authorList>
            <consortium name="US DOE Joint Genome Institute"/>
            <person name="Copeland A."/>
            <person name="Lucas S."/>
            <person name="Lapidus A."/>
            <person name="Barry K."/>
            <person name="Glavina del Rio T."/>
            <person name="Dalin E."/>
            <person name="Tice H."/>
            <person name="Pitluck S."/>
            <person name="Chain P."/>
            <person name="Malfatti S."/>
            <person name="Shin M."/>
            <person name="Vergez L."/>
            <person name="Schmutz J."/>
            <person name="Larimer F."/>
            <person name="Land M."/>
            <person name="Hauser L."/>
            <person name="Kyrpides N."/>
            <person name="Anderson I."/>
            <person name="Sieprawska-Lupa M."/>
            <person name="Whitman W.B."/>
            <person name="Richardson P."/>
        </authorList>
    </citation>
    <scope>NUCLEOTIDE SEQUENCE [LARGE SCALE GENOMIC DNA]</scope>
    <source>
        <strain>ATCC 35089 / DSM 1224 / JCM 13029 / OCM 148 / SB</strain>
    </source>
</reference>
<gene>
    <name evidence="1" type="primary">cobQ</name>
    <name type="ordered locus">Mevan_0530</name>
</gene>
<accession>A6UPL5</accession>
<sequence length="491" mass="54908">MAKFIMVVGTASNSGKTVLVSGICRMLVNQGYKVAPFKSQNMSLNSRVSVEDGEIAVAQYTQAIAAKVNPSIHFNPVLLKPKGNFISQVIVHGKPYKDMDYNEYRKEKNYFLEKIKESIEYLDKNYDYVVIEGAGSCCEINLLNDDIANLKVAELSNADAILVSDIDRGGVFASIYGTVNLLPENWKKLLKGFVINKFRGNIDVLKDGFEKIEELTNIPVIGTIPYDETLVLPEEDSQAIQGKKVFGNLKSPVEVNIVKFSKIANFTDLDPLSNDCLMKYIDFNDDITGDILILPGTRCSTVEMNLMKKYGLDKKIHEFINKGGIIFGICGGYQTLGKILIDENFSEGNVGTISGLDVFNMETTFGNKKAINNSNGILKINDMEYEVSGYELHEGYSVSKETPLITLSNGFGNLGDMYDGSFKQIENSYIFGTYLHGILENFEFRNYLVNLVLSKKNLKNISKDNYEKVLQENMDKLSKIIEESIDFSKIL</sequence>
<feature type="chain" id="PRO_1000002366" description="Probable cobyric acid synthase">
    <location>
        <begin position="1"/>
        <end position="491"/>
    </location>
</feature>
<feature type="domain" description="GATase cobBQ-type" evidence="1">
    <location>
        <begin position="252"/>
        <end position="444"/>
    </location>
</feature>
<feature type="active site" description="Nucleophile" evidence="1">
    <location>
        <position position="330"/>
    </location>
</feature>
<feature type="active site" evidence="1">
    <location>
        <position position="436"/>
    </location>
</feature>
<protein>
    <recommendedName>
        <fullName evidence="1">Probable cobyric acid synthase</fullName>
    </recommendedName>
</protein>
<proteinExistence type="inferred from homology"/>
<keyword id="KW-0169">Cobalamin biosynthesis</keyword>
<keyword id="KW-0315">Glutamine amidotransferase</keyword>
<name>COBQ_METVS</name>
<evidence type="ECO:0000255" key="1">
    <source>
        <dbReference type="HAMAP-Rule" id="MF_00028"/>
    </source>
</evidence>
<organism>
    <name type="scientific">Methanococcus vannielii (strain ATCC 35089 / DSM 1224 / JCM 13029 / OCM 148 / SB)</name>
    <dbReference type="NCBI Taxonomy" id="406327"/>
    <lineage>
        <taxon>Archaea</taxon>
        <taxon>Methanobacteriati</taxon>
        <taxon>Methanobacteriota</taxon>
        <taxon>Methanomada group</taxon>
        <taxon>Methanococci</taxon>
        <taxon>Methanococcales</taxon>
        <taxon>Methanococcaceae</taxon>
        <taxon>Methanococcus</taxon>
    </lineage>
</organism>
<comment type="function">
    <text evidence="1">Catalyzes amidations at positions B, D, E, and G on adenosylcobyrinic A,C-diamide. NH(2) groups are provided by glutamine, and one molecule of ATP is hydrogenolyzed for each amidation.</text>
</comment>
<comment type="pathway">
    <text evidence="1">Cofactor biosynthesis; adenosylcobalamin biosynthesis.</text>
</comment>
<comment type="similarity">
    <text evidence="1">Belongs to the CobB/CobQ family. CobQ subfamily.</text>
</comment>